<comment type="function">
    <text evidence="1">Participates actively in the response to hyperosmotic and heat shock by preventing the aggregation of stress-denatured proteins, in association with DnaK and GrpE. It is the nucleotide exchange factor for DnaK and may function as a thermosensor. Unfolded proteins bind initially to DnaJ; upon interaction with the DnaJ-bound protein, DnaK hydrolyzes its bound ATP, resulting in the formation of a stable complex. GrpE releases ADP from DnaK; ATP binding to DnaK triggers the release of the substrate protein, thus completing the reaction cycle. Several rounds of ATP-dependent interactions between DnaJ, DnaK and GrpE are required for fully efficient folding.</text>
</comment>
<comment type="subunit">
    <text evidence="1">Homodimer.</text>
</comment>
<comment type="subcellular location">
    <subcellularLocation>
        <location evidence="1">Cytoplasm</location>
    </subcellularLocation>
</comment>
<comment type="similarity">
    <text evidence="1">Belongs to the GrpE family.</text>
</comment>
<accession>O08384</accession>
<feature type="chain" id="PRO_0000113827" description="Protein GrpE">
    <location>
        <begin position="1"/>
        <end position="195"/>
    </location>
</feature>
<feature type="region of interest" description="Disordered" evidence="2">
    <location>
        <begin position="1"/>
        <end position="45"/>
    </location>
</feature>
<feature type="compositionally biased region" description="Basic and acidic residues" evidence="2">
    <location>
        <begin position="1"/>
        <end position="14"/>
    </location>
</feature>
<keyword id="KW-0143">Chaperone</keyword>
<keyword id="KW-0963">Cytoplasm</keyword>
<keyword id="KW-1185">Reference proteome</keyword>
<keyword id="KW-0346">Stress response</keyword>
<reference key="1">
    <citation type="submission" date="1998-10" db="EMBL/GenBank/DDBJ databases">
        <authorList>
            <person name="Iizumi T."/>
        </authorList>
    </citation>
    <scope>NUCLEOTIDE SEQUENCE [GENOMIC DNA]</scope>
    <source>
        <strain>ATCC 19718 / CIP 103999 / KCTC 2705 / NBRC 14298</strain>
    </source>
</reference>
<reference key="2">
    <citation type="journal article" date="2003" name="J. Bacteriol.">
        <title>Complete genome sequence of the ammonia-oxidizing bacterium and obligate chemolithoautotroph Nitrosomonas europaea.</title>
        <authorList>
            <person name="Chain P."/>
            <person name="Lamerdin J.E."/>
            <person name="Larimer F.W."/>
            <person name="Regala W."/>
            <person name="Lao V."/>
            <person name="Land M.L."/>
            <person name="Hauser L."/>
            <person name="Hooper A.B."/>
            <person name="Klotz M.G."/>
            <person name="Norton J."/>
            <person name="Sayavedra-Soto L.A."/>
            <person name="Arciero D.M."/>
            <person name="Hommes N.G."/>
            <person name="Whittaker M.M."/>
            <person name="Arp D.J."/>
        </authorList>
    </citation>
    <scope>NUCLEOTIDE SEQUENCE [LARGE SCALE GENOMIC DNA]</scope>
    <source>
        <strain>ATCC 19718 / CIP 103999 / KCTC 2705 / NBRC 14298</strain>
    </source>
</reference>
<reference key="3">
    <citation type="journal article" date="1997" name="Appl. Environ. Microbiol.">
        <title>Cloning, nucleotide sequence, and regulatory analysis of the Nitrosomonas europaea dnaK gene.</title>
        <authorList>
            <person name="Iizumi T."/>
            <person name="Nakamura K."/>
        </authorList>
    </citation>
    <scope>NUCLEOTIDE SEQUENCE [GENOMIC DNA] OF 111-195</scope>
    <source>
        <strain>ATCC 19718 / CIP 103999 / KCTC 2705 / NBRC 14298</strain>
    </source>
</reference>
<gene>
    <name evidence="1" type="primary">grpE</name>
    <name type="ordered locus">NE1950</name>
</gene>
<name>GRPE_NITEU</name>
<proteinExistence type="inferred from homology"/>
<evidence type="ECO:0000255" key="1">
    <source>
        <dbReference type="HAMAP-Rule" id="MF_01151"/>
    </source>
</evidence>
<evidence type="ECO:0000256" key="2">
    <source>
        <dbReference type="SAM" id="MobiDB-lite"/>
    </source>
</evidence>
<dbReference type="EMBL" id="AB018706">
    <property type="protein sequence ID" value="BAA33934.1"/>
    <property type="molecule type" value="Genomic_DNA"/>
</dbReference>
<dbReference type="EMBL" id="AL954747">
    <property type="protein sequence ID" value="CAD85861.1"/>
    <property type="molecule type" value="Genomic_DNA"/>
</dbReference>
<dbReference type="RefSeq" id="WP_011112482.1">
    <property type="nucleotide sequence ID" value="NC_004757.1"/>
</dbReference>
<dbReference type="SMR" id="O08384"/>
<dbReference type="STRING" id="228410.NE1950"/>
<dbReference type="GeneID" id="87105104"/>
<dbReference type="KEGG" id="neu:NE1950"/>
<dbReference type="eggNOG" id="COG0576">
    <property type="taxonomic scope" value="Bacteria"/>
</dbReference>
<dbReference type="HOGENOM" id="CLU_057217_6_1_4"/>
<dbReference type="OrthoDB" id="9789811at2"/>
<dbReference type="PhylomeDB" id="O08384"/>
<dbReference type="Proteomes" id="UP000001416">
    <property type="component" value="Chromosome"/>
</dbReference>
<dbReference type="GO" id="GO:0005829">
    <property type="term" value="C:cytosol"/>
    <property type="evidence" value="ECO:0007669"/>
    <property type="project" value="TreeGrafter"/>
</dbReference>
<dbReference type="GO" id="GO:0000774">
    <property type="term" value="F:adenyl-nucleotide exchange factor activity"/>
    <property type="evidence" value="ECO:0007669"/>
    <property type="project" value="InterPro"/>
</dbReference>
<dbReference type="GO" id="GO:0042803">
    <property type="term" value="F:protein homodimerization activity"/>
    <property type="evidence" value="ECO:0007669"/>
    <property type="project" value="InterPro"/>
</dbReference>
<dbReference type="GO" id="GO:0051087">
    <property type="term" value="F:protein-folding chaperone binding"/>
    <property type="evidence" value="ECO:0007669"/>
    <property type="project" value="InterPro"/>
</dbReference>
<dbReference type="GO" id="GO:0051082">
    <property type="term" value="F:unfolded protein binding"/>
    <property type="evidence" value="ECO:0007669"/>
    <property type="project" value="TreeGrafter"/>
</dbReference>
<dbReference type="GO" id="GO:0006457">
    <property type="term" value="P:protein folding"/>
    <property type="evidence" value="ECO:0007669"/>
    <property type="project" value="InterPro"/>
</dbReference>
<dbReference type="CDD" id="cd00446">
    <property type="entry name" value="GrpE"/>
    <property type="match status" value="1"/>
</dbReference>
<dbReference type="FunFam" id="2.30.22.10:FF:000001">
    <property type="entry name" value="Protein GrpE"/>
    <property type="match status" value="1"/>
</dbReference>
<dbReference type="Gene3D" id="3.90.20.20">
    <property type="match status" value="1"/>
</dbReference>
<dbReference type="Gene3D" id="2.30.22.10">
    <property type="entry name" value="Head domain of nucleotide exchange factor GrpE"/>
    <property type="match status" value="1"/>
</dbReference>
<dbReference type="HAMAP" id="MF_01151">
    <property type="entry name" value="GrpE"/>
    <property type="match status" value="1"/>
</dbReference>
<dbReference type="InterPro" id="IPR000740">
    <property type="entry name" value="GrpE"/>
</dbReference>
<dbReference type="InterPro" id="IPR013805">
    <property type="entry name" value="GrpE_coiled_coil"/>
</dbReference>
<dbReference type="InterPro" id="IPR009012">
    <property type="entry name" value="GrpE_head"/>
</dbReference>
<dbReference type="NCBIfam" id="NF010737">
    <property type="entry name" value="PRK14139.1"/>
    <property type="match status" value="1"/>
</dbReference>
<dbReference type="NCBIfam" id="NF010738">
    <property type="entry name" value="PRK14140.1"/>
    <property type="match status" value="1"/>
</dbReference>
<dbReference type="NCBIfam" id="NF010748">
    <property type="entry name" value="PRK14150.1"/>
    <property type="match status" value="1"/>
</dbReference>
<dbReference type="PANTHER" id="PTHR21237">
    <property type="entry name" value="GRPE PROTEIN"/>
    <property type="match status" value="1"/>
</dbReference>
<dbReference type="PANTHER" id="PTHR21237:SF23">
    <property type="entry name" value="GRPE PROTEIN HOMOLOG, MITOCHONDRIAL"/>
    <property type="match status" value="1"/>
</dbReference>
<dbReference type="Pfam" id="PF01025">
    <property type="entry name" value="GrpE"/>
    <property type="match status" value="1"/>
</dbReference>
<dbReference type="PRINTS" id="PR00773">
    <property type="entry name" value="GRPEPROTEIN"/>
</dbReference>
<dbReference type="SUPFAM" id="SSF58014">
    <property type="entry name" value="Coiled-coil domain of nucleotide exchange factor GrpE"/>
    <property type="match status" value="1"/>
</dbReference>
<dbReference type="SUPFAM" id="SSF51064">
    <property type="entry name" value="Head domain of nucleotide exchange factor GrpE"/>
    <property type="match status" value="1"/>
</dbReference>
<dbReference type="PROSITE" id="PS01071">
    <property type="entry name" value="GRPE"/>
    <property type="match status" value="1"/>
</dbReference>
<organism>
    <name type="scientific">Nitrosomonas europaea (strain ATCC 19718 / CIP 103999 / KCTC 2705 / NBRC 14298)</name>
    <dbReference type="NCBI Taxonomy" id="228410"/>
    <lineage>
        <taxon>Bacteria</taxon>
        <taxon>Pseudomonadati</taxon>
        <taxon>Pseudomonadota</taxon>
        <taxon>Betaproteobacteria</taxon>
        <taxon>Nitrosomonadales</taxon>
        <taxon>Nitrosomonadaceae</taxon>
        <taxon>Nitrosomonas</taxon>
    </lineage>
</organism>
<protein>
    <recommendedName>
        <fullName evidence="1">Protein GrpE</fullName>
    </recommendedName>
    <alternativeName>
        <fullName evidence="1">HSP-70 cofactor</fullName>
    </alternativeName>
</protein>
<sequence>MQEPHDQEPIEKQKLPGMDDVLETEHSGTVAGNTERAGEDAAPSLEQQLKEAEIRAAEHHDAWLRAKAETENIRKRAQTDIASAHKYAIDNFSVQLLAVMDSLDAALATENSTLENLRDGVELTRKQLAAVFEKFNIHTIDPQGEKFDPHQHEAMCAVESDFAPNTVIQVMQKGYMLHDRVIRPAMVTVSKAKGT</sequence>